<sequence>MSSKTLYDKVWDLHRIADLPGGATQLFVGLHLIHEVTSPQAFAALEEKGLSVNCPDRTIATVDHIVPTTNHQRPFSDPLAEEMLHTLEKNCSNHHIKLFGIGSGNQGIVHVMAPESGLTQPGMTIACGDSHTSTHGAFGAIAFGIGTSQVRDVLATQSLAMKKLKVRRIWVDGQLTNGVFAKDLILHVIRHLGVKGGVGYAYEFAGPAIKKLSMEERMTICNMAIEGGARCGYVNPDQTTFDYLEGKPYIPTGQEWESALQWWKELASDQNAIFDDEVKFDACKISPTVTWGITPGQAIGIDELIPKVDSLETSDQQTAREAYLYMNLHPGSSIEGLGIDVCFIGSCTNGRLSDLQAAAKIVKNRHVAKGIKAFVVPGSEKVAKAAEAEGLDVLFQNAGFEWRKPGCSMCLAMNPDRLEGNQISASSSNRNFKGRQGSARGRTLLMSPAMVAAAAISGSVTDVRNLINQGP</sequence>
<accession>A9BDM7</accession>
<gene>
    <name evidence="1" type="primary">leuC</name>
    <name type="ordered locus">P9211_02821</name>
</gene>
<name>LEUC_PROM4</name>
<evidence type="ECO:0000255" key="1">
    <source>
        <dbReference type="HAMAP-Rule" id="MF_01026"/>
    </source>
</evidence>
<proteinExistence type="inferred from homology"/>
<dbReference type="EC" id="4.2.1.33" evidence="1"/>
<dbReference type="EMBL" id="CP000878">
    <property type="protein sequence ID" value="ABX08213.1"/>
    <property type="molecule type" value="Genomic_DNA"/>
</dbReference>
<dbReference type="RefSeq" id="WP_012194838.1">
    <property type="nucleotide sequence ID" value="NC_009976.1"/>
</dbReference>
<dbReference type="SMR" id="A9BDM7"/>
<dbReference type="STRING" id="93059.P9211_02821"/>
<dbReference type="KEGG" id="pmj:P9211_02821"/>
<dbReference type="eggNOG" id="COG0065">
    <property type="taxonomic scope" value="Bacteria"/>
</dbReference>
<dbReference type="HOGENOM" id="CLU_006714_3_4_3"/>
<dbReference type="OrthoDB" id="9802769at2"/>
<dbReference type="UniPathway" id="UPA00048">
    <property type="reaction ID" value="UER00071"/>
</dbReference>
<dbReference type="Proteomes" id="UP000000788">
    <property type="component" value="Chromosome"/>
</dbReference>
<dbReference type="GO" id="GO:0003861">
    <property type="term" value="F:3-isopropylmalate dehydratase activity"/>
    <property type="evidence" value="ECO:0007669"/>
    <property type="project" value="UniProtKB-UniRule"/>
</dbReference>
<dbReference type="GO" id="GO:0051539">
    <property type="term" value="F:4 iron, 4 sulfur cluster binding"/>
    <property type="evidence" value="ECO:0007669"/>
    <property type="project" value="UniProtKB-KW"/>
</dbReference>
<dbReference type="GO" id="GO:0046872">
    <property type="term" value="F:metal ion binding"/>
    <property type="evidence" value="ECO:0007669"/>
    <property type="project" value="UniProtKB-KW"/>
</dbReference>
<dbReference type="GO" id="GO:0009098">
    <property type="term" value="P:L-leucine biosynthetic process"/>
    <property type="evidence" value="ECO:0007669"/>
    <property type="project" value="UniProtKB-UniRule"/>
</dbReference>
<dbReference type="CDD" id="cd01583">
    <property type="entry name" value="IPMI"/>
    <property type="match status" value="1"/>
</dbReference>
<dbReference type="Gene3D" id="3.30.499.10">
    <property type="entry name" value="Aconitase, domain 3"/>
    <property type="match status" value="2"/>
</dbReference>
<dbReference type="HAMAP" id="MF_01026">
    <property type="entry name" value="LeuC_type1"/>
    <property type="match status" value="1"/>
</dbReference>
<dbReference type="InterPro" id="IPR004430">
    <property type="entry name" value="3-IsopropMal_deHydase_lsu"/>
</dbReference>
<dbReference type="InterPro" id="IPR015931">
    <property type="entry name" value="Acnase/IPM_dHydase_lsu_aba_1/3"/>
</dbReference>
<dbReference type="InterPro" id="IPR001030">
    <property type="entry name" value="Acoase/IPM_deHydtase_lsu_aba"/>
</dbReference>
<dbReference type="InterPro" id="IPR018136">
    <property type="entry name" value="Aconitase_4Fe-4S_BS"/>
</dbReference>
<dbReference type="InterPro" id="IPR036008">
    <property type="entry name" value="Aconitase_4Fe-4S_dom"/>
</dbReference>
<dbReference type="InterPro" id="IPR050067">
    <property type="entry name" value="IPM_dehydratase_rel_enz"/>
</dbReference>
<dbReference type="InterPro" id="IPR033941">
    <property type="entry name" value="IPMI_cat"/>
</dbReference>
<dbReference type="NCBIfam" id="TIGR00170">
    <property type="entry name" value="leuC"/>
    <property type="match status" value="1"/>
</dbReference>
<dbReference type="NCBIfam" id="NF004016">
    <property type="entry name" value="PRK05478.1"/>
    <property type="match status" value="1"/>
</dbReference>
<dbReference type="NCBIfam" id="NF009116">
    <property type="entry name" value="PRK12466.1"/>
    <property type="match status" value="1"/>
</dbReference>
<dbReference type="PANTHER" id="PTHR43822:SF9">
    <property type="entry name" value="3-ISOPROPYLMALATE DEHYDRATASE"/>
    <property type="match status" value="1"/>
</dbReference>
<dbReference type="PANTHER" id="PTHR43822">
    <property type="entry name" value="HOMOACONITASE, MITOCHONDRIAL-RELATED"/>
    <property type="match status" value="1"/>
</dbReference>
<dbReference type="Pfam" id="PF00330">
    <property type="entry name" value="Aconitase"/>
    <property type="match status" value="1"/>
</dbReference>
<dbReference type="PRINTS" id="PR00415">
    <property type="entry name" value="ACONITASE"/>
</dbReference>
<dbReference type="SUPFAM" id="SSF53732">
    <property type="entry name" value="Aconitase iron-sulfur domain"/>
    <property type="match status" value="1"/>
</dbReference>
<dbReference type="PROSITE" id="PS00450">
    <property type="entry name" value="ACONITASE_1"/>
    <property type="match status" value="1"/>
</dbReference>
<dbReference type="PROSITE" id="PS01244">
    <property type="entry name" value="ACONITASE_2"/>
    <property type="match status" value="1"/>
</dbReference>
<organism>
    <name type="scientific">Prochlorococcus marinus (strain MIT 9211)</name>
    <dbReference type="NCBI Taxonomy" id="93059"/>
    <lineage>
        <taxon>Bacteria</taxon>
        <taxon>Bacillati</taxon>
        <taxon>Cyanobacteriota</taxon>
        <taxon>Cyanophyceae</taxon>
        <taxon>Synechococcales</taxon>
        <taxon>Prochlorococcaceae</taxon>
        <taxon>Prochlorococcus</taxon>
    </lineage>
</organism>
<keyword id="KW-0004">4Fe-4S</keyword>
<keyword id="KW-0028">Amino-acid biosynthesis</keyword>
<keyword id="KW-0100">Branched-chain amino acid biosynthesis</keyword>
<keyword id="KW-0408">Iron</keyword>
<keyword id="KW-0411">Iron-sulfur</keyword>
<keyword id="KW-0432">Leucine biosynthesis</keyword>
<keyword id="KW-0456">Lyase</keyword>
<keyword id="KW-0479">Metal-binding</keyword>
<keyword id="KW-1185">Reference proteome</keyword>
<comment type="function">
    <text evidence="1">Catalyzes the isomerization between 2-isopropylmalate and 3-isopropylmalate, via the formation of 2-isopropylmaleate.</text>
</comment>
<comment type="catalytic activity">
    <reaction evidence="1">
        <text>(2R,3S)-3-isopropylmalate = (2S)-2-isopropylmalate</text>
        <dbReference type="Rhea" id="RHEA:32287"/>
        <dbReference type="ChEBI" id="CHEBI:1178"/>
        <dbReference type="ChEBI" id="CHEBI:35121"/>
        <dbReference type="EC" id="4.2.1.33"/>
    </reaction>
</comment>
<comment type="cofactor">
    <cofactor evidence="1">
        <name>[4Fe-4S] cluster</name>
        <dbReference type="ChEBI" id="CHEBI:49883"/>
    </cofactor>
    <text evidence="1">Binds 1 [4Fe-4S] cluster per subunit.</text>
</comment>
<comment type="pathway">
    <text evidence="1">Amino-acid biosynthesis; L-leucine biosynthesis; L-leucine from 3-methyl-2-oxobutanoate: step 2/4.</text>
</comment>
<comment type="subunit">
    <text evidence="1">Heterodimer of LeuC and LeuD.</text>
</comment>
<comment type="similarity">
    <text evidence="1">Belongs to the aconitase/IPM isomerase family. LeuC type 1 subfamily.</text>
</comment>
<feature type="chain" id="PRO_1000135703" description="3-isopropylmalate dehydratase large subunit">
    <location>
        <begin position="1"/>
        <end position="471"/>
    </location>
</feature>
<feature type="binding site" evidence="1">
    <location>
        <position position="347"/>
    </location>
    <ligand>
        <name>[4Fe-4S] cluster</name>
        <dbReference type="ChEBI" id="CHEBI:49883"/>
    </ligand>
</feature>
<feature type="binding site" evidence="1">
    <location>
        <position position="407"/>
    </location>
    <ligand>
        <name>[4Fe-4S] cluster</name>
        <dbReference type="ChEBI" id="CHEBI:49883"/>
    </ligand>
</feature>
<feature type="binding site" evidence="1">
    <location>
        <position position="410"/>
    </location>
    <ligand>
        <name>[4Fe-4S] cluster</name>
        <dbReference type="ChEBI" id="CHEBI:49883"/>
    </ligand>
</feature>
<protein>
    <recommendedName>
        <fullName evidence="1">3-isopropylmalate dehydratase large subunit</fullName>
        <ecNumber evidence="1">4.2.1.33</ecNumber>
    </recommendedName>
    <alternativeName>
        <fullName evidence="1">Alpha-IPM isomerase</fullName>
        <shortName evidence="1">IPMI</shortName>
    </alternativeName>
    <alternativeName>
        <fullName evidence="1">Isopropylmalate isomerase</fullName>
    </alternativeName>
</protein>
<reference key="1">
    <citation type="journal article" date="2007" name="PLoS Genet.">
        <title>Patterns and implications of gene gain and loss in the evolution of Prochlorococcus.</title>
        <authorList>
            <person name="Kettler G.C."/>
            <person name="Martiny A.C."/>
            <person name="Huang K."/>
            <person name="Zucker J."/>
            <person name="Coleman M.L."/>
            <person name="Rodrigue S."/>
            <person name="Chen F."/>
            <person name="Lapidus A."/>
            <person name="Ferriera S."/>
            <person name="Johnson J."/>
            <person name="Steglich C."/>
            <person name="Church G.M."/>
            <person name="Richardson P."/>
            <person name="Chisholm S.W."/>
        </authorList>
    </citation>
    <scope>NUCLEOTIDE SEQUENCE [LARGE SCALE GENOMIC DNA]</scope>
    <source>
        <strain>MIT 9211</strain>
    </source>
</reference>